<reference key="1">
    <citation type="journal article" date="2004" name="Nat. Genet.">
        <title>Comparison of genome degradation in Paratyphi A and Typhi, human-restricted serovars of Salmonella enterica that cause typhoid.</title>
        <authorList>
            <person name="McClelland M."/>
            <person name="Sanderson K.E."/>
            <person name="Clifton S.W."/>
            <person name="Latreille P."/>
            <person name="Porwollik S."/>
            <person name="Sabo A."/>
            <person name="Meyer R."/>
            <person name="Bieri T."/>
            <person name="Ozersky P."/>
            <person name="McLellan M."/>
            <person name="Harkins C.R."/>
            <person name="Wang C."/>
            <person name="Nguyen C."/>
            <person name="Berghoff A."/>
            <person name="Elliott G."/>
            <person name="Kohlberg S."/>
            <person name="Strong C."/>
            <person name="Du F."/>
            <person name="Carter J."/>
            <person name="Kremizki C."/>
            <person name="Layman D."/>
            <person name="Leonard S."/>
            <person name="Sun H."/>
            <person name="Fulton L."/>
            <person name="Nash W."/>
            <person name="Miner T."/>
            <person name="Minx P."/>
            <person name="Delehaunty K."/>
            <person name="Fronick C."/>
            <person name="Magrini V."/>
            <person name="Nhan M."/>
            <person name="Warren W."/>
            <person name="Florea L."/>
            <person name="Spieth J."/>
            <person name="Wilson R.K."/>
        </authorList>
    </citation>
    <scope>NUCLEOTIDE SEQUENCE [LARGE SCALE GENOMIC DNA]</scope>
    <source>
        <strain>ATCC 9150 / SARB42</strain>
    </source>
</reference>
<accession>Q5PJ57</accession>
<organism>
    <name type="scientific">Salmonella paratyphi A (strain ATCC 9150 / SARB42)</name>
    <dbReference type="NCBI Taxonomy" id="295319"/>
    <lineage>
        <taxon>Bacteria</taxon>
        <taxon>Pseudomonadati</taxon>
        <taxon>Pseudomonadota</taxon>
        <taxon>Gammaproteobacteria</taxon>
        <taxon>Enterobacterales</taxon>
        <taxon>Enterobacteriaceae</taxon>
        <taxon>Salmonella</taxon>
    </lineage>
</organism>
<gene>
    <name evidence="1" type="primary">priB</name>
    <name type="ordered locus">SPA4209</name>
</gene>
<dbReference type="EMBL" id="CP000026">
    <property type="protein sequence ID" value="AAV79946.1"/>
    <property type="molecule type" value="Genomic_DNA"/>
</dbReference>
<dbReference type="RefSeq" id="WP_001519453.1">
    <property type="nucleotide sequence ID" value="NC_006511.1"/>
</dbReference>
<dbReference type="SMR" id="Q5PJ57"/>
<dbReference type="GeneID" id="66758616"/>
<dbReference type="KEGG" id="spt:SPA4209"/>
<dbReference type="HOGENOM" id="CLU_166075_0_0_6"/>
<dbReference type="Proteomes" id="UP000008185">
    <property type="component" value="Chromosome"/>
</dbReference>
<dbReference type="GO" id="GO:1990077">
    <property type="term" value="C:primosome complex"/>
    <property type="evidence" value="ECO:0007669"/>
    <property type="project" value="UniProtKB-KW"/>
</dbReference>
<dbReference type="GO" id="GO:0003697">
    <property type="term" value="F:single-stranded DNA binding"/>
    <property type="evidence" value="ECO:0007669"/>
    <property type="project" value="UniProtKB-UniRule"/>
</dbReference>
<dbReference type="GO" id="GO:0006269">
    <property type="term" value="P:DNA replication, synthesis of primer"/>
    <property type="evidence" value="ECO:0007669"/>
    <property type="project" value="UniProtKB-KW"/>
</dbReference>
<dbReference type="CDD" id="cd04496">
    <property type="entry name" value="SSB_OBF"/>
    <property type="match status" value="1"/>
</dbReference>
<dbReference type="FunFam" id="2.40.50.140:FF:000077">
    <property type="entry name" value="Primosomal replication protein N"/>
    <property type="match status" value="1"/>
</dbReference>
<dbReference type="Gene3D" id="2.40.50.140">
    <property type="entry name" value="Nucleic acid-binding proteins"/>
    <property type="match status" value="1"/>
</dbReference>
<dbReference type="HAMAP" id="MF_00720">
    <property type="entry name" value="PriB"/>
    <property type="match status" value="1"/>
</dbReference>
<dbReference type="InterPro" id="IPR012340">
    <property type="entry name" value="NA-bd_OB-fold"/>
</dbReference>
<dbReference type="InterPro" id="IPR000424">
    <property type="entry name" value="Primosome_PriB/ssb"/>
</dbReference>
<dbReference type="InterPro" id="IPR023646">
    <property type="entry name" value="Prisomal_replication_PriB"/>
</dbReference>
<dbReference type="NCBIfam" id="TIGR04418">
    <property type="entry name" value="PriB_gamma"/>
    <property type="match status" value="1"/>
</dbReference>
<dbReference type="Pfam" id="PF22657">
    <property type="entry name" value="SSB_1"/>
    <property type="match status" value="1"/>
</dbReference>
<dbReference type="PIRSF" id="PIRSF003135">
    <property type="entry name" value="Primosomal_n"/>
    <property type="match status" value="1"/>
</dbReference>
<dbReference type="SUPFAM" id="SSF50249">
    <property type="entry name" value="Nucleic acid-binding proteins"/>
    <property type="match status" value="1"/>
</dbReference>
<dbReference type="PROSITE" id="PS50935">
    <property type="entry name" value="SSB"/>
    <property type="match status" value="1"/>
</dbReference>
<sequence>MTNRLALSGTVCRAPLRKVSPSGIPHCQFVLEHRSVQEEAGFHRQAWCQMPVIVSGHENQAITHSITVGSRITVQGFISCHKAKNGLSKMVLHAEQIELIDSGD</sequence>
<comment type="function">
    <text evidence="1">Involved in the restart of stalled replication forks, which reloads the replicative helicase on sites other than the origin of replication; the PriA-PriB pathway is the major replication restart pathway. During primosome assembly it facilitates complex formation between PriA and DnaT on DNA; stabilizes PriA on DNA. Stimulates the DNA unwinding activity of PriA helicase.</text>
</comment>
<comment type="subunit">
    <text evidence="1">Homodimer. Interacts with PriA and DnaT. Component of the replication restart primosome. Primosome assembly occurs via a 'hand-off' mechanism. PriA binds to replication forks, subsequently PriB then DnaT bind; DnaT then displaces ssDNA to generate the helicase loading substrate.</text>
</comment>
<comment type="similarity">
    <text evidence="1">Belongs to the PriB family.</text>
</comment>
<protein>
    <recommendedName>
        <fullName evidence="1">Replication restart protein PriB</fullName>
    </recommendedName>
</protein>
<proteinExistence type="inferred from homology"/>
<evidence type="ECO:0000255" key="1">
    <source>
        <dbReference type="HAMAP-Rule" id="MF_00720"/>
    </source>
</evidence>
<keyword id="KW-0235">DNA replication</keyword>
<keyword id="KW-0238">DNA-binding</keyword>
<keyword id="KW-0639">Primosome</keyword>
<feature type="chain" id="PRO_1000083289" description="Replication restart protein PriB">
    <location>
        <begin position="1"/>
        <end position="104"/>
    </location>
</feature>
<feature type="domain" description="SSB" evidence="1">
    <location>
        <begin position="1"/>
        <end position="101"/>
    </location>
</feature>
<name>PRIB_SALPA</name>